<comment type="function">
    <text evidence="1">Receptor for relaxin. The activity of this receptor is mediated by G proteins leading to stimulation of adenylate cyclase and an increase of cAMP. May also be a receptor for Leydig insulin-like peptide (INSL3) (By similarity).</text>
</comment>
<comment type="subcellular location">
    <subcellularLocation>
        <location>Cell membrane</location>
        <topology>Multi-pass membrane protein</topology>
    </subcellularLocation>
</comment>
<comment type="tissue specificity">
    <text>Expressed in embryonic and adult gonads of males and females, as well in male gubernarculum. Expressed also in brain. Not detected in kidney, spleen and heart.</text>
</comment>
<comment type="disease">
    <text evidence="6">Defects in Rxfp2 seems to be a cause of impaired testicular descent (known as cryptorchidism).</text>
</comment>
<comment type="similarity">
    <text evidence="4">Belongs to the G-protein coupled receptor 1 family.</text>
</comment>
<comment type="caution">
    <text evidence="5">By homology with the human sequence, it is uncertain whether Met-1 is the initiator.</text>
</comment>
<evidence type="ECO:0000250" key="1"/>
<evidence type="ECO:0000255" key="2"/>
<evidence type="ECO:0000255" key="3">
    <source>
        <dbReference type="PROSITE-ProRule" id="PRU00124"/>
    </source>
</evidence>
<evidence type="ECO:0000255" key="4">
    <source>
        <dbReference type="PROSITE-ProRule" id="PRU00521"/>
    </source>
</evidence>
<evidence type="ECO:0000305" key="5"/>
<evidence type="ECO:0000305" key="6">
    <source>
    </source>
</evidence>
<accession>Q91ZZ5</accession>
<accession>Q0VB90</accession>
<protein>
    <recommendedName>
        <fullName>Relaxin receptor 2</fullName>
    </recommendedName>
    <alternativeName>
        <fullName>G-protein coupled receptor 106</fullName>
    </alternativeName>
    <alternativeName>
        <fullName>G-protein coupled receptor affecting testicular descent</fullName>
    </alternativeName>
    <alternativeName>
        <fullName>Leucine-rich repeat-containing G-protein coupled receptor 8</fullName>
    </alternativeName>
    <alternativeName>
        <fullName>Relaxin family peptide receptor 2</fullName>
    </alternativeName>
</protein>
<organism>
    <name type="scientific">Mus musculus</name>
    <name type="common">Mouse</name>
    <dbReference type="NCBI Taxonomy" id="10090"/>
    <lineage>
        <taxon>Eukaryota</taxon>
        <taxon>Metazoa</taxon>
        <taxon>Chordata</taxon>
        <taxon>Craniata</taxon>
        <taxon>Vertebrata</taxon>
        <taxon>Euteleostomi</taxon>
        <taxon>Mammalia</taxon>
        <taxon>Eutheria</taxon>
        <taxon>Euarchontoglires</taxon>
        <taxon>Glires</taxon>
        <taxon>Rodentia</taxon>
        <taxon>Myomorpha</taxon>
        <taxon>Muroidea</taxon>
        <taxon>Muridae</taxon>
        <taxon>Murinae</taxon>
        <taxon>Mus</taxon>
        <taxon>Mus</taxon>
    </lineage>
</organism>
<feature type="chain" id="PRO_0000069703" description="Relaxin receptor 2">
    <location>
        <begin position="1"/>
        <end position="737"/>
    </location>
</feature>
<feature type="topological domain" description="Extracellular" evidence="2">
    <location>
        <begin position="1"/>
        <end position="399"/>
    </location>
</feature>
<feature type="transmembrane region" description="Helical; Name=1" evidence="2">
    <location>
        <begin position="400"/>
        <end position="420"/>
    </location>
</feature>
<feature type="topological domain" description="Cytoplasmic" evidence="2">
    <location>
        <begin position="421"/>
        <end position="438"/>
    </location>
</feature>
<feature type="transmembrane region" description="Helical; Name=2" evidence="2">
    <location>
        <begin position="439"/>
        <end position="459"/>
    </location>
</feature>
<feature type="topological domain" description="Extracellular" evidence="2">
    <location>
        <begin position="460"/>
        <end position="478"/>
    </location>
</feature>
<feature type="transmembrane region" description="Helical; Name=3" evidence="2">
    <location>
        <begin position="479"/>
        <end position="501"/>
    </location>
</feature>
<feature type="topological domain" description="Cytoplasmic" evidence="2">
    <location>
        <begin position="502"/>
        <end position="520"/>
    </location>
</feature>
<feature type="transmembrane region" description="Helical; Name=4" evidence="2">
    <location>
        <begin position="521"/>
        <end position="541"/>
    </location>
</feature>
<feature type="topological domain" description="Extracellular" evidence="2">
    <location>
        <begin position="542"/>
        <end position="575"/>
    </location>
</feature>
<feature type="transmembrane region" description="Helical; Name=5" evidence="2">
    <location>
        <begin position="576"/>
        <end position="596"/>
    </location>
</feature>
<feature type="topological domain" description="Cytoplasmic" evidence="2">
    <location>
        <begin position="597"/>
        <end position="622"/>
    </location>
</feature>
<feature type="transmembrane region" description="Helical; Name=6" evidence="2">
    <location>
        <begin position="623"/>
        <end position="643"/>
    </location>
</feature>
<feature type="topological domain" description="Extracellular" evidence="2">
    <location>
        <begin position="644"/>
        <end position="653"/>
    </location>
</feature>
<feature type="transmembrane region" description="Helical; Name=7" evidence="2">
    <location>
        <begin position="654"/>
        <end position="674"/>
    </location>
</feature>
<feature type="topological domain" description="Cytoplasmic" evidence="2">
    <location>
        <begin position="675"/>
        <end position="737"/>
    </location>
</feature>
<feature type="domain" description="LDL-receptor class A" evidence="3">
    <location>
        <begin position="27"/>
        <end position="64"/>
    </location>
</feature>
<feature type="repeat" description="LRR 1">
    <location>
        <begin position="121"/>
        <end position="142"/>
    </location>
</feature>
<feature type="repeat" description="LRR 2">
    <location>
        <begin position="145"/>
        <end position="166"/>
    </location>
</feature>
<feature type="repeat" description="LRR 3">
    <location>
        <begin position="169"/>
        <end position="190"/>
    </location>
</feature>
<feature type="repeat" description="LRR 4">
    <location>
        <begin position="193"/>
        <end position="214"/>
    </location>
</feature>
<feature type="repeat" description="LRR 5">
    <location>
        <begin position="217"/>
        <end position="238"/>
    </location>
</feature>
<feature type="repeat" description="LRR 6">
    <location>
        <begin position="241"/>
        <end position="262"/>
    </location>
</feature>
<feature type="repeat" description="LRR 7">
    <location>
        <begin position="265"/>
        <end position="286"/>
    </location>
</feature>
<feature type="repeat" description="LRR 8">
    <location>
        <begin position="289"/>
        <end position="310"/>
    </location>
</feature>
<feature type="repeat" description="LRR 9">
    <location>
        <begin position="313"/>
        <end position="334"/>
    </location>
</feature>
<feature type="repeat" description="LRR 10">
    <location>
        <begin position="337"/>
        <end position="358"/>
    </location>
</feature>
<feature type="glycosylation site" description="N-linked (GlcNAc...) asparagine" evidence="2">
    <location>
        <position position="37"/>
    </location>
</feature>
<feature type="glycosylation site" description="N-linked (GlcNAc...) asparagine" evidence="2">
    <location>
        <position position="121"/>
    </location>
</feature>
<feature type="glycosylation site" description="N-linked (GlcNAc...) asparagine" evidence="2">
    <location>
        <position position="257"/>
    </location>
</feature>
<feature type="glycosylation site" description="N-linked (GlcNAc...) asparagine" evidence="2">
    <location>
        <position position="318"/>
    </location>
</feature>
<feature type="glycosylation site" description="N-linked (GlcNAc...) asparagine" evidence="2">
    <location>
        <position position="350"/>
    </location>
</feature>
<feature type="glycosylation site" description="N-linked (GlcNAc...) asparagine" evidence="2">
    <location>
        <position position="361"/>
    </location>
</feature>
<feature type="disulfide bond" evidence="1">
    <location>
        <begin position="28"/>
        <end position="41"/>
    </location>
</feature>
<feature type="disulfide bond" evidence="1">
    <location>
        <begin position="35"/>
        <end position="54"/>
    </location>
</feature>
<feature type="disulfide bond" evidence="1">
    <location>
        <begin position="48"/>
        <end position="63"/>
    </location>
</feature>
<feature type="disulfide bond" evidence="1">
    <location>
        <begin position="478"/>
        <end position="556"/>
    </location>
</feature>
<feature type="sequence conflict" description="In Ref. 1; AAL08943." evidence="5" ref="1">
    <original>S</original>
    <variation>P</variation>
    <location>
        <position position="222"/>
    </location>
</feature>
<sequence length="737" mass="82934">MWLLLHVILLTEVKDFALADSSMVAPLCPKGYFPCGNLTKCLPRAFHCDGVDDCGNGADEDNCGDTSGWTTIFGTVHGNVNKVTLTQECFLSQYPQHCYCRENELECVKADLKAVPKVSSNVTLLSLKKNKIHRLPVKVFSRYTELRKIYLQHNCITHISRRAFLGLHNLQILYLSHNCITSLRPGIFKDLHQLAWLILDDNPITRISQKSFMGLNSLFFLSMVGNRLEALPETLCAQMPQLNWVDLANNGIKYITNSTFLTCDSLTVLFLPRNQIGFVPEKTFSSLKNLGELDLSSNMITKLPVHLFSDLHLLQKLNLSSNPLLYVHKNQFGSLKQLQSLDLERIEIPNISTGMFQPMKNLSHIYLKTFRYCSYVPHVRICMPSTDGISSSEDLLANGILRVSVWVIAFITCVGNFLVIAVRSLIKAENTTHAMSIKILCCADCLMGVYLFSVGVFDIKYRGQYQKYALLWMESVPCRLLGFLATLSTEVSVLLLTFLTLEKFLVIVFPFSNLRLGKRQTAVALASIWVVGFLIAAVPFTREDYFGNFYGKNGVCFPLHYDQAEDFGSRGYSLGIFLGVNLLAFLVIVISYVTMFCSIHKTALQTAEVRSHIGKEVAVANRFFFIVFSDAICWIPVFVVKILSLLQVEIPGTITSWIVVFFLPVNSALNPILYTLTTSFFKDKLKQLLHKHRRKPIFKVKKKSLSASIVWTDESSLKLGVLSKIALGDSIMKPVSP</sequence>
<reference key="1">
    <citation type="journal article" date="2001" name="Genesis">
        <title>A transgenic insertion causing cryptorchidism in mice.</title>
        <authorList>
            <person name="Overbeek P.A."/>
            <person name="Gorlov I.P."/>
            <person name="Sutherland R.W."/>
            <person name="Houston J.B."/>
            <person name="Harrison W.R."/>
            <person name="Boettger-Tong H.L."/>
            <person name="Bishop C.E."/>
            <person name="Agoulnik A.I."/>
        </authorList>
    </citation>
    <scope>NUCLEOTIDE SEQUENCE [MRNA]</scope>
    <source>
        <strain>C57BL/6J</strain>
    </source>
</reference>
<reference key="2">
    <citation type="journal article" date="2009" name="PLoS Biol.">
        <title>Lineage-specific biology revealed by a finished genome assembly of the mouse.</title>
        <authorList>
            <person name="Church D.M."/>
            <person name="Goodstadt L."/>
            <person name="Hillier L.W."/>
            <person name="Zody M.C."/>
            <person name="Goldstein S."/>
            <person name="She X."/>
            <person name="Bult C.J."/>
            <person name="Agarwala R."/>
            <person name="Cherry J.L."/>
            <person name="DiCuccio M."/>
            <person name="Hlavina W."/>
            <person name="Kapustin Y."/>
            <person name="Meric P."/>
            <person name="Maglott D."/>
            <person name="Birtle Z."/>
            <person name="Marques A.C."/>
            <person name="Graves T."/>
            <person name="Zhou S."/>
            <person name="Teague B."/>
            <person name="Potamousis K."/>
            <person name="Churas C."/>
            <person name="Place M."/>
            <person name="Herschleb J."/>
            <person name="Runnheim R."/>
            <person name="Forrest D."/>
            <person name="Amos-Landgraf J."/>
            <person name="Schwartz D.C."/>
            <person name="Cheng Z."/>
            <person name="Lindblad-Toh K."/>
            <person name="Eichler E.E."/>
            <person name="Ponting C.P."/>
        </authorList>
    </citation>
    <scope>NUCLEOTIDE SEQUENCE [LARGE SCALE GENOMIC DNA]</scope>
    <source>
        <strain>C57BL/6J</strain>
    </source>
</reference>
<reference key="3">
    <citation type="journal article" date="2004" name="Genome Res.">
        <title>The status, quality, and expansion of the NIH full-length cDNA project: the Mammalian Gene Collection (MGC).</title>
        <authorList>
            <consortium name="The MGC Project Team"/>
        </authorList>
    </citation>
    <scope>NUCLEOTIDE SEQUENCE [LARGE SCALE MRNA]</scope>
    <source>
        <tissue>Brain</tissue>
    </source>
</reference>
<dbReference type="EMBL" id="AF346501">
    <property type="protein sequence ID" value="AAL08943.1"/>
    <property type="molecule type" value="mRNA"/>
</dbReference>
<dbReference type="EMBL" id="AC077689">
    <property type="status" value="NOT_ANNOTATED_CDS"/>
    <property type="molecule type" value="Genomic_DNA"/>
</dbReference>
<dbReference type="EMBL" id="BC120741">
    <property type="protein sequence ID" value="AAI20742.1"/>
    <property type="molecule type" value="mRNA"/>
</dbReference>
<dbReference type="CCDS" id="CCDS19886.1"/>
<dbReference type="RefSeq" id="NP_001276493.1">
    <property type="nucleotide sequence ID" value="NM_001289564.1"/>
</dbReference>
<dbReference type="RefSeq" id="NP_001276495.1">
    <property type="nucleotide sequence ID" value="NM_001289566.1"/>
</dbReference>
<dbReference type="RefSeq" id="NP_536716.2">
    <property type="nucleotide sequence ID" value="NM_080468.2"/>
</dbReference>
<dbReference type="SMR" id="Q91ZZ5"/>
<dbReference type="BioGRID" id="228271">
    <property type="interactions" value="2"/>
</dbReference>
<dbReference type="FunCoup" id="Q91ZZ5">
    <property type="interactions" value="1108"/>
</dbReference>
<dbReference type="STRING" id="10090.ENSMUSP00000067897"/>
<dbReference type="ChEMBL" id="CHEMBL3714702"/>
<dbReference type="GlyCosmos" id="Q91ZZ5">
    <property type="glycosylation" value="6 sites, No reported glycans"/>
</dbReference>
<dbReference type="GlyGen" id="Q91ZZ5">
    <property type="glycosylation" value="6 sites, 2 N-linked glycans (2 sites)"/>
</dbReference>
<dbReference type="iPTMnet" id="Q91ZZ5"/>
<dbReference type="PhosphoSitePlus" id="Q91ZZ5"/>
<dbReference type="PaxDb" id="10090-ENSMUSP00000067897"/>
<dbReference type="ProteomicsDB" id="256552"/>
<dbReference type="Antibodypedia" id="22835">
    <property type="antibodies" value="311 antibodies from 30 providers"/>
</dbReference>
<dbReference type="Ensembl" id="ENSMUST00000065745.10">
    <property type="protein sequence ID" value="ENSMUSP00000067897.4"/>
    <property type="gene ID" value="ENSMUSG00000053368.14"/>
</dbReference>
<dbReference type="GeneID" id="140498"/>
<dbReference type="KEGG" id="mmu:140498"/>
<dbReference type="UCSC" id="uc009ato.1">
    <property type="organism name" value="mouse"/>
</dbReference>
<dbReference type="AGR" id="MGI:2153463"/>
<dbReference type="CTD" id="122042"/>
<dbReference type="MGI" id="MGI:2153463">
    <property type="gene designation" value="Rxfp2"/>
</dbReference>
<dbReference type="VEuPathDB" id="HostDB:ENSMUSG00000053368"/>
<dbReference type="eggNOG" id="KOG0619">
    <property type="taxonomic scope" value="Eukaryota"/>
</dbReference>
<dbReference type="eggNOG" id="KOG2087">
    <property type="taxonomic scope" value="Eukaryota"/>
</dbReference>
<dbReference type="GeneTree" id="ENSGT00940000158948"/>
<dbReference type="InParanoid" id="Q91ZZ5"/>
<dbReference type="OMA" id="NISTQMF"/>
<dbReference type="PhylomeDB" id="Q91ZZ5"/>
<dbReference type="TreeFam" id="TF326185"/>
<dbReference type="Reactome" id="R-MMU-418555">
    <property type="pathway name" value="G alpha (s) signalling events"/>
</dbReference>
<dbReference type="Reactome" id="R-MMU-444821">
    <property type="pathway name" value="Relaxin receptors"/>
</dbReference>
<dbReference type="BioGRID-ORCS" id="140498">
    <property type="hits" value="4 hits in 77 CRISPR screens"/>
</dbReference>
<dbReference type="ChiTaRS" id="Rxfp2">
    <property type="organism name" value="mouse"/>
</dbReference>
<dbReference type="PRO" id="PR:Q91ZZ5"/>
<dbReference type="Proteomes" id="UP000000589">
    <property type="component" value="Chromosome 5"/>
</dbReference>
<dbReference type="RNAct" id="Q91ZZ5">
    <property type="molecule type" value="protein"/>
</dbReference>
<dbReference type="Bgee" id="ENSMUSG00000053368">
    <property type="expression patterns" value="Expressed in mesothelium and 42 other cell types or tissues"/>
</dbReference>
<dbReference type="ExpressionAtlas" id="Q91ZZ5">
    <property type="expression patterns" value="baseline and differential"/>
</dbReference>
<dbReference type="GO" id="GO:0005886">
    <property type="term" value="C:plasma membrane"/>
    <property type="evidence" value="ECO:0007669"/>
    <property type="project" value="UniProtKB-SubCell"/>
</dbReference>
<dbReference type="GO" id="GO:0004930">
    <property type="term" value="F:G protein-coupled receptor activity"/>
    <property type="evidence" value="ECO:0007669"/>
    <property type="project" value="UniProtKB-KW"/>
</dbReference>
<dbReference type="GO" id="GO:0017046">
    <property type="term" value="F:peptide hormone binding"/>
    <property type="evidence" value="ECO:0007669"/>
    <property type="project" value="Ensembl"/>
</dbReference>
<dbReference type="GO" id="GO:0016500">
    <property type="term" value="F:protein-hormone receptor activity"/>
    <property type="evidence" value="ECO:0000315"/>
    <property type="project" value="MGI"/>
</dbReference>
<dbReference type="GO" id="GO:0007189">
    <property type="term" value="P:adenylate cyclase-activating G protein-coupled receptor signaling pathway"/>
    <property type="evidence" value="ECO:0000315"/>
    <property type="project" value="MGI"/>
</dbReference>
<dbReference type="GO" id="GO:0007193">
    <property type="term" value="P:adenylate cyclase-inhibiting G protein-coupled receptor signaling pathway"/>
    <property type="evidence" value="ECO:0007669"/>
    <property type="project" value="Ensembl"/>
</dbReference>
<dbReference type="GO" id="GO:0008584">
    <property type="term" value="P:male gonad development"/>
    <property type="evidence" value="ECO:0000315"/>
    <property type="project" value="MGI"/>
</dbReference>
<dbReference type="GO" id="GO:0043066">
    <property type="term" value="P:negative regulation of apoptotic process"/>
    <property type="evidence" value="ECO:0007669"/>
    <property type="project" value="Ensembl"/>
</dbReference>
<dbReference type="GO" id="GO:0008285">
    <property type="term" value="P:negative regulation of cell population proliferation"/>
    <property type="evidence" value="ECO:0007669"/>
    <property type="project" value="Ensembl"/>
</dbReference>
<dbReference type="GO" id="GO:0001556">
    <property type="term" value="P:oocyte maturation"/>
    <property type="evidence" value="ECO:0007669"/>
    <property type="project" value="Ensembl"/>
</dbReference>
<dbReference type="CDD" id="cd00112">
    <property type="entry name" value="LDLa"/>
    <property type="match status" value="1"/>
</dbReference>
<dbReference type="FunFam" id="1.20.1070.10:FF:000023">
    <property type="entry name" value="Relaxin family peptide receptor 1"/>
    <property type="match status" value="1"/>
</dbReference>
<dbReference type="FunFam" id="4.10.400.10:FF:000014">
    <property type="entry name" value="Relaxin family peptide receptor 1"/>
    <property type="match status" value="1"/>
</dbReference>
<dbReference type="FunFam" id="3.80.10.10:FF:000207">
    <property type="entry name" value="Relaxin family peptide receptor 2"/>
    <property type="match status" value="1"/>
</dbReference>
<dbReference type="FunFam" id="3.80.10.10:FF:000300">
    <property type="entry name" value="Relaxin family peptide receptor 2"/>
    <property type="match status" value="1"/>
</dbReference>
<dbReference type="Gene3D" id="4.10.400.10">
    <property type="entry name" value="Low-density Lipoprotein Receptor"/>
    <property type="match status" value="1"/>
</dbReference>
<dbReference type="Gene3D" id="1.20.1070.10">
    <property type="entry name" value="Rhodopsin 7-helix transmembrane proteins"/>
    <property type="match status" value="1"/>
</dbReference>
<dbReference type="Gene3D" id="3.80.10.10">
    <property type="entry name" value="Ribonuclease Inhibitor"/>
    <property type="match status" value="2"/>
</dbReference>
<dbReference type="InterPro" id="IPR000276">
    <property type="entry name" value="GPCR_Rhodpsn"/>
</dbReference>
<dbReference type="InterPro" id="IPR017452">
    <property type="entry name" value="GPCR_Rhodpsn_7TM"/>
</dbReference>
<dbReference type="InterPro" id="IPR036055">
    <property type="entry name" value="LDL_receptor-like_sf"/>
</dbReference>
<dbReference type="InterPro" id="IPR023415">
    <property type="entry name" value="LDLR_class-A_CS"/>
</dbReference>
<dbReference type="InterPro" id="IPR002172">
    <property type="entry name" value="LDrepeatLR_classA_rpt"/>
</dbReference>
<dbReference type="InterPro" id="IPR001611">
    <property type="entry name" value="Leu-rich_rpt"/>
</dbReference>
<dbReference type="InterPro" id="IPR003591">
    <property type="entry name" value="Leu-rich_rpt_typical-subtyp"/>
</dbReference>
<dbReference type="InterPro" id="IPR032675">
    <property type="entry name" value="LRR_dom_sf"/>
</dbReference>
<dbReference type="InterPro" id="IPR008112">
    <property type="entry name" value="Relaxin_rcpt"/>
</dbReference>
<dbReference type="PANTHER" id="PTHR24372">
    <property type="entry name" value="GLYCOPROTEIN HORMONE RECEPTOR"/>
    <property type="match status" value="1"/>
</dbReference>
<dbReference type="PANTHER" id="PTHR24372:SF72">
    <property type="entry name" value="RELAXIN RECEPTOR 2"/>
    <property type="match status" value="1"/>
</dbReference>
<dbReference type="Pfam" id="PF00001">
    <property type="entry name" value="7tm_1"/>
    <property type="match status" value="1"/>
</dbReference>
<dbReference type="Pfam" id="PF00057">
    <property type="entry name" value="Ldl_recept_a"/>
    <property type="match status" value="1"/>
</dbReference>
<dbReference type="Pfam" id="PF13855">
    <property type="entry name" value="LRR_8"/>
    <property type="match status" value="2"/>
</dbReference>
<dbReference type="PRINTS" id="PR00237">
    <property type="entry name" value="GPCRRHODOPSN"/>
</dbReference>
<dbReference type="PRINTS" id="PR01739">
    <property type="entry name" value="RELAXINR"/>
</dbReference>
<dbReference type="SMART" id="SM00192">
    <property type="entry name" value="LDLa"/>
    <property type="match status" value="1"/>
</dbReference>
<dbReference type="SMART" id="SM00369">
    <property type="entry name" value="LRR_TYP"/>
    <property type="match status" value="10"/>
</dbReference>
<dbReference type="SUPFAM" id="SSF81321">
    <property type="entry name" value="Family A G protein-coupled receptor-like"/>
    <property type="match status" value="1"/>
</dbReference>
<dbReference type="SUPFAM" id="SSF52058">
    <property type="entry name" value="L domain-like"/>
    <property type="match status" value="1"/>
</dbReference>
<dbReference type="SUPFAM" id="SSF57424">
    <property type="entry name" value="LDL receptor-like module"/>
    <property type="match status" value="1"/>
</dbReference>
<dbReference type="PROSITE" id="PS50262">
    <property type="entry name" value="G_PROTEIN_RECEP_F1_2"/>
    <property type="match status" value="1"/>
</dbReference>
<dbReference type="PROSITE" id="PS01209">
    <property type="entry name" value="LDLRA_1"/>
    <property type="match status" value="1"/>
</dbReference>
<dbReference type="PROSITE" id="PS50068">
    <property type="entry name" value="LDLRA_2"/>
    <property type="match status" value="1"/>
</dbReference>
<dbReference type="PROSITE" id="PS51450">
    <property type="entry name" value="LRR"/>
    <property type="match status" value="10"/>
</dbReference>
<keyword id="KW-1003">Cell membrane</keyword>
<keyword id="KW-1015">Disulfide bond</keyword>
<keyword id="KW-0297">G-protein coupled receptor</keyword>
<keyword id="KW-0325">Glycoprotein</keyword>
<keyword id="KW-0433">Leucine-rich repeat</keyword>
<keyword id="KW-0472">Membrane</keyword>
<keyword id="KW-0675">Receptor</keyword>
<keyword id="KW-1185">Reference proteome</keyword>
<keyword id="KW-0677">Repeat</keyword>
<keyword id="KW-0807">Transducer</keyword>
<keyword id="KW-0812">Transmembrane</keyword>
<keyword id="KW-1133">Transmembrane helix</keyword>
<gene>
    <name type="primary">Rxfp2</name>
    <name type="synonym">Gpr106</name>
    <name type="synonym">Great</name>
    <name type="synonym">Lgr8</name>
</gene>
<proteinExistence type="evidence at transcript level"/>
<name>RXFP2_MOUSE</name>